<proteinExistence type="inferred from homology"/>
<sequence length="515" mass="56574">MVQPYKHEPFTDFTVDANRQAFLAALEKVEAELGREYPLIIGGERVMTEDKITSVNPANKAEVIGRVAKANKELAERAMKTADEAFRTWSRTSPEARADILFRAAAIVRRRKHEFSAWLVKEAGKPWREADADTAEAIDFMEYYGRQMLKLKDGIPVESRPGETNRFFYIPLGVGVVISPWNFPFAIMAGTTVAALVTGNTVLLKPASATPVVAYKFAEVLEEAGLPAGVLNYIPGSGAEVGDYLVEHPRTRFISFTGSRDVGIRIYERAAKVQPGQIWLKRVIAEMGGKDAIVVDKEADLELAAQSIVASAFGFSGQKCSACSRAIIVEDVYDQVLNRVVELTKQLNVGDPAEQATFMGPVIDQGAYNKIMEYIEIGKQEGRLMTGGEGDDSKGFFIQPTVFADVDPNARIMQEEIFGPVVAFAKARDFDHALEIANNTQYGLTGAVISRNRANLEKARHEFHVGNLYFNRGCTGAIVGYQPFGGFNMSGTDSKAGGPDYLILHMQAKTVSEMF</sequence>
<feature type="chain" id="PRO_1000045971" description="1-pyrroline-5-carboxylate dehydrogenase">
    <location>
        <begin position="1"/>
        <end position="515"/>
    </location>
</feature>
<feature type="active site" evidence="1">
    <location>
        <position position="286"/>
    </location>
</feature>
<feature type="active site" evidence="1">
    <location>
        <position position="320"/>
    </location>
</feature>
<reference key="1">
    <citation type="journal article" date="2007" name="Proc. Natl. Acad. Sci. U.S.A.">
        <title>Genome and proteome of long-chain alkane degrading Geobacillus thermodenitrificans NG80-2 isolated from a deep-subsurface oil reservoir.</title>
        <authorList>
            <person name="Feng L."/>
            <person name="Wang W."/>
            <person name="Cheng J."/>
            <person name="Ren Y."/>
            <person name="Zhao G."/>
            <person name="Gao C."/>
            <person name="Tang Y."/>
            <person name="Liu X."/>
            <person name="Han W."/>
            <person name="Peng X."/>
            <person name="Liu R."/>
            <person name="Wang L."/>
        </authorList>
    </citation>
    <scope>NUCLEOTIDE SEQUENCE [LARGE SCALE GENOMIC DNA]</scope>
    <source>
        <strain>NG80-2</strain>
    </source>
</reference>
<comment type="catalytic activity">
    <reaction evidence="1">
        <text>L-glutamate 5-semialdehyde + NAD(+) + H2O = L-glutamate + NADH + 2 H(+)</text>
        <dbReference type="Rhea" id="RHEA:30235"/>
        <dbReference type="ChEBI" id="CHEBI:15377"/>
        <dbReference type="ChEBI" id="CHEBI:15378"/>
        <dbReference type="ChEBI" id="CHEBI:29985"/>
        <dbReference type="ChEBI" id="CHEBI:57540"/>
        <dbReference type="ChEBI" id="CHEBI:57945"/>
        <dbReference type="ChEBI" id="CHEBI:58066"/>
        <dbReference type="EC" id="1.2.1.88"/>
    </reaction>
</comment>
<comment type="pathway">
    <text evidence="1">Amino-acid degradation; L-proline degradation into L-glutamate; L-glutamate from L-proline: step 2/2.</text>
</comment>
<comment type="similarity">
    <text evidence="1">Belongs to the aldehyde dehydrogenase family. RocA subfamily.</text>
</comment>
<organism>
    <name type="scientific">Geobacillus thermodenitrificans (strain NG80-2)</name>
    <dbReference type="NCBI Taxonomy" id="420246"/>
    <lineage>
        <taxon>Bacteria</taxon>
        <taxon>Bacillati</taxon>
        <taxon>Bacillota</taxon>
        <taxon>Bacilli</taxon>
        <taxon>Bacillales</taxon>
        <taxon>Anoxybacillaceae</taxon>
        <taxon>Geobacillus</taxon>
    </lineage>
</organism>
<gene>
    <name evidence="1" type="primary">rocA</name>
    <name type="ordered locus">GTNG_0169</name>
</gene>
<name>ROCA_GEOTN</name>
<accession>A4IJP9</accession>
<keyword id="KW-0520">NAD</keyword>
<keyword id="KW-0560">Oxidoreductase</keyword>
<protein>
    <recommendedName>
        <fullName evidence="1">1-pyrroline-5-carboxylate dehydrogenase</fullName>
        <shortName evidence="1">P5C dehydrogenase</shortName>
        <ecNumber evidence="1">1.2.1.88</ecNumber>
    </recommendedName>
    <alternativeName>
        <fullName evidence="1">L-glutamate gamma-semialdehyde dehydrogenase</fullName>
    </alternativeName>
</protein>
<dbReference type="EC" id="1.2.1.88" evidence="1"/>
<dbReference type="EMBL" id="CP000557">
    <property type="protein sequence ID" value="ABO65553.1"/>
    <property type="molecule type" value="Genomic_DNA"/>
</dbReference>
<dbReference type="RefSeq" id="WP_008881510.1">
    <property type="nucleotide sequence ID" value="NC_009328.1"/>
</dbReference>
<dbReference type="SMR" id="A4IJP9"/>
<dbReference type="GeneID" id="87622241"/>
<dbReference type="KEGG" id="gtn:GTNG_0169"/>
<dbReference type="eggNOG" id="COG1012">
    <property type="taxonomic scope" value="Bacteria"/>
</dbReference>
<dbReference type="HOGENOM" id="CLU_005391_0_0_9"/>
<dbReference type="UniPathway" id="UPA00261">
    <property type="reaction ID" value="UER00374"/>
</dbReference>
<dbReference type="Proteomes" id="UP000001578">
    <property type="component" value="Chromosome"/>
</dbReference>
<dbReference type="GO" id="GO:0009898">
    <property type="term" value="C:cytoplasmic side of plasma membrane"/>
    <property type="evidence" value="ECO:0007669"/>
    <property type="project" value="TreeGrafter"/>
</dbReference>
<dbReference type="GO" id="GO:0003842">
    <property type="term" value="F:1-pyrroline-5-carboxylate dehydrogenase activity"/>
    <property type="evidence" value="ECO:0007669"/>
    <property type="project" value="UniProtKB-UniRule"/>
</dbReference>
<dbReference type="GO" id="GO:0006537">
    <property type="term" value="P:glutamate biosynthetic process"/>
    <property type="evidence" value="ECO:0007669"/>
    <property type="project" value="UniProtKB-UniRule"/>
</dbReference>
<dbReference type="GO" id="GO:0010133">
    <property type="term" value="P:proline catabolic process to glutamate"/>
    <property type="evidence" value="ECO:0007669"/>
    <property type="project" value="UniProtKB-UniPathway"/>
</dbReference>
<dbReference type="CDD" id="cd07124">
    <property type="entry name" value="ALDH_PutA-P5CDH-RocA"/>
    <property type="match status" value="1"/>
</dbReference>
<dbReference type="FunFam" id="3.40.309.10:FF:000005">
    <property type="entry name" value="1-pyrroline-5-carboxylate dehydrogenase 1"/>
    <property type="match status" value="1"/>
</dbReference>
<dbReference type="FunFam" id="3.40.605.10:FF:000045">
    <property type="entry name" value="1-pyrroline-5-carboxylate dehydrogenase 1"/>
    <property type="match status" value="1"/>
</dbReference>
<dbReference type="Gene3D" id="3.40.605.10">
    <property type="entry name" value="Aldehyde Dehydrogenase, Chain A, domain 1"/>
    <property type="match status" value="1"/>
</dbReference>
<dbReference type="Gene3D" id="3.40.309.10">
    <property type="entry name" value="Aldehyde Dehydrogenase, Chain A, domain 2"/>
    <property type="match status" value="1"/>
</dbReference>
<dbReference type="HAMAP" id="MF_00733">
    <property type="entry name" value="RocA"/>
    <property type="match status" value="1"/>
</dbReference>
<dbReference type="InterPro" id="IPR016161">
    <property type="entry name" value="Ald_DH/histidinol_DH"/>
</dbReference>
<dbReference type="InterPro" id="IPR016163">
    <property type="entry name" value="Ald_DH_C"/>
</dbReference>
<dbReference type="InterPro" id="IPR016160">
    <property type="entry name" value="Ald_DH_CS_CYS"/>
</dbReference>
<dbReference type="InterPro" id="IPR029510">
    <property type="entry name" value="Ald_DH_CS_GLU"/>
</dbReference>
<dbReference type="InterPro" id="IPR016162">
    <property type="entry name" value="Ald_DH_N"/>
</dbReference>
<dbReference type="InterPro" id="IPR015590">
    <property type="entry name" value="Aldehyde_DH_dom"/>
</dbReference>
<dbReference type="InterPro" id="IPR050485">
    <property type="entry name" value="Proline_metab_enzyme"/>
</dbReference>
<dbReference type="InterPro" id="IPR005932">
    <property type="entry name" value="RocA"/>
</dbReference>
<dbReference type="InterPro" id="IPR047597">
    <property type="entry name" value="RocA_bacillales"/>
</dbReference>
<dbReference type="NCBIfam" id="TIGR01237">
    <property type="entry name" value="D1pyr5carbox2"/>
    <property type="match status" value="1"/>
</dbReference>
<dbReference type="NCBIfam" id="NF002852">
    <property type="entry name" value="PRK03137.1"/>
    <property type="match status" value="1"/>
</dbReference>
<dbReference type="PANTHER" id="PTHR42862">
    <property type="entry name" value="DELTA-1-PYRROLINE-5-CARBOXYLATE DEHYDROGENASE 1, ISOFORM A-RELATED"/>
    <property type="match status" value="1"/>
</dbReference>
<dbReference type="PANTHER" id="PTHR42862:SF1">
    <property type="entry name" value="DELTA-1-PYRROLINE-5-CARBOXYLATE DEHYDROGENASE 2, ISOFORM A-RELATED"/>
    <property type="match status" value="1"/>
</dbReference>
<dbReference type="Pfam" id="PF00171">
    <property type="entry name" value="Aldedh"/>
    <property type="match status" value="1"/>
</dbReference>
<dbReference type="SUPFAM" id="SSF53720">
    <property type="entry name" value="ALDH-like"/>
    <property type="match status" value="1"/>
</dbReference>
<dbReference type="PROSITE" id="PS00070">
    <property type="entry name" value="ALDEHYDE_DEHYDR_CYS"/>
    <property type="match status" value="1"/>
</dbReference>
<dbReference type="PROSITE" id="PS00687">
    <property type="entry name" value="ALDEHYDE_DEHYDR_GLU"/>
    <property type="match status" value="1"/>
</dbReference>
<evidence type="ECO:0000255" key="1">
    <source>
        <dbReference type="HAMAP-Rule" id="MF_00733"/>
    </source>
</evidence>